<feature type="chain" id="PRO_1000072785" description="Nucleoid-associated protein VC0395_A1624/VC395_2154">
    <location>
        <begin position="1"/>
        <end position="333"/>
    </location>
</feature>
<organism>
    <name type="scientific">Vibrio cholerae serotype O1 (strain ATCC 39541 / Classical Ogawa 395 / O395)</name>
    <dbReference type="NCBI Taxonomy" id="345073"/>
    <lineage>
        <taxon>Bacteria</taxon>
        <taxon>Pseudomonadati</taxon>
        <taxon>Pseudomonadota</taxon>
        <taxon>Gammaproteobacteria</taxon>
        <taxon>Vibrionales</taxon>
        <taxon>Vibrionaceae</taxon>
        <taxon>Vibrio</taxon>
    </lineage>
</organism>
<reference key="1">
    <citation type="submission" date="2007-03" db="EMBL/GenBank/DDBJ databases">
        <authorList>
            <person name="Heidelberg J."/>
        </authorList>
    </citation>
    <scope>NUCLEOTIDE SEQUENCE [LARGE SCALE GENOMIC DNA]</scope>
    <source>
        <strain>ATCC 39541 / Classical Ogawa 395 / O395</strain>
    </source>
</reference>
<reference key="2">
    <citation type="journal article" date="2008" name="PLoS ONE">
        <title>A recalibrated molecular clock and independent origins for the cholera pandemic clones.</title>
        <authorList>
            <person name="Feng L."/>
            <person name="Reeves P.R."/>
            <person name="Lan R."/>
            <person name="Ren Y."/>
            <person name="Gao C."/>
            <person name="Zhou Z."/>
            <person name="Ren Y."/>
            <person name="Cheng J."/>
            <person name="Wang W."/>
            <person name="Wang J."/>
            <person name="Qian W."/>
            <person name="Li D."/>
            <person name="Wang L."/>
        </authorList>
    </citation>
    <scope>NUCLEOTIDE SEQUENCE [LARGE SCALE GENOMIC DNA]</scope>
    <source>
        <strain>ATCC 39541 / Classical Ogawa 395 / O395</strain>
    </source>
</reference>
<keyword id="KW-0963">Cytoplasm</keyword>
<name>NDPA_VIBC3</name>
<gene>
    <name type="ordered locus">VC0395_A1624</name>
    <name type="ordered locus">VC395_2154</name>
</gene>
<proteinExistence type="inferred from homology"/>
<dbReference type="EMBL" id="CP000627">
    <property type="protein sequence ID" value="ABQ21341.1"/>
    <property type="molecule type" value="Genomic_DNA"/>
</dbReference>
<dbReference type="EMBL" id="CP001235">
    <property type="protein sequence ID" value="ACP10146.1"/>
    <property type="molecule type" value="Genomic_DNA"/>
</dbReference>
<dbReference type="SMR" id="A5F6M1"/>
<dbReference type="KEGG" id="vco:VC0395_A1624"/>
<dbReference type="KEGG" id="vcr:VC395_2154"/>
<dbReference type="PATRIC" id="fig|345073.21.peg.2080"/>
<dbReference type="eggNOG" id="COG3081">
    <property type="taxonomic scope" value="Bacteria"/>
</dbReference>
<dbReference type="HOGENOM" id="CLU_063050_0_1_6"/>
<dbReference type="OrthoDB" id="9131762at2"/>
<dbReference type="Proteomes" id="UP000000249">
    <property type="component" value="Chromosome 2"/>
</dbReference>
<dbReference type="GO" id="GO:0043590">
    <property type="term" value="C:bacterial nucleoid"/>
    <property type="evidence" value="ECO:0007669"/>
    <property type="project" value="TreeGrafter"/>
</dbReference>
<dbReference type="GO" id="GO:0005737">
    <property type="term" value="C:cytoplasm"/>
    <property type="evidence" value="ECO:0007669"/>
    <property type="project" value="UniProtKB-UniRule"/>
</dbReference>
<dbReference type="GO" id="GO:0003690">
    <property type="term" value="F:double-stranded DNA binding"/>
    <property type="evidence" value="ECO:0007669"/>
    <property type="project" value="TreeGrafter"/>
</dbReference>
<dbReference type="GO" id="GO:0003727">
    <property type="term" value="F:single-stranded RNA binding"/>
    <property type="evidence" value="ECO:0007669"/>
    <property type="project" value="TreeGrafter"/>
</dbReference>
<dbReference type="HAMAP" id="MF_00730">
    <property type="entry name" value="NdpA"/>
    <property type="match status" value="1"/>
</dbReference>
<dbReference type="InterPro" id="IPR007358">
    <property type="entry name" value="Nucleoid_associated_NdpA"/>
</dbReference>
<dbReference type="NCBIfam" id="NF001557">
    <property type="entry name" value="PRK00378.1"/>
    <property type="match status" value="1"/>
</dbReference>
<dbReference type="PANTHER" id="PTHR38772">
    <property type="match status" value="1"/>
</dbReference>
<dbReference type="PANTHER" id="PTHR38772:SF1">
    <property type="entry name" value="NUCLEOID-ASSOCIATED PROTEIN YEJK"/>
    <property type="match status" value="1"/>
</dbReference>
<dbReference type="Pfam" id="PF04245">
    <property type="entry name" value="NA37"/>
    <property type="match status" value="1"/>
</dbReference>
<protein>
    <recommendedName>
        <fullName evidence="1">Nucleoid-associated protein VC0395_A1624/VC395_2154</fullName>
    </recommendedName>
</protein>
<sequence>MSLFLSNVILHQLRKNDNDELVVNYRAESLRNDTSTENLVAELHRVFNAKAGKGFGCFKSDSEFQLWLQEMRRGTLPFYEFSQQSAQRLKNELAKYPFADEGILVMAEYQSLATDYLFIGLLPLNQSLKVTEGLDISATDYLDINKMDIVARIDLSSYETDKESKRYLSYIKGRVGRKVADFFLDFLQADIGLDTKQQNQVLMQAVEDFCADAKFEKEEVISYKKQVYEYCNDQIKAGDEVRVQELSGELPPSNEGVNFFDFTREQGYQLEESFPADRSTVRKLTKYVGAGGGLNLSFDSLLLGERVFYDPETDTLTIKGTPPNLRDQLTRLR</sequence>
<evidence type="ECO:0000255" key="1">
    <source>
        <dbReference type="HAMAP-Rule" id="MF_00730"/>
    </source>
</evidence>
<accession>A5F6M1</accession>
<accession>C3M2M2</accession>
<comment type="subcellular location">
    <subcellularLocation>
        <location evidence="1">Cytoplasm</location>
        <location evidence="1">Nucleoid</location>
    </subcellularLocation>
</comment>
<comment type="similarity">
    <text evidence="1">Belongs to the YejK family.</text>
</comment>